<feature type="chain" id="PRO_0000364035" description="Pyruvoyl-dependent arginine decarboxylase subunit beta">
    <location>
        <begin position="1"/>
        <end position="52"/>
    </location>
</feature>
<feature type="chain" id="PRO_0000364036" description="Pyruvoyl-dependent arginine decarboxylase subunit alpha">
    <location>
        <begin position="53"/>
        <end position="195"/>
    </location>
</feature>
<feature type="site" description="Cleavage (non-hydrolytic)" evidence="1">
    <location>
        <begin position="52"/>
        <end position="53"/>
    </location>
</feature>
<feature type="modified residue" description="Pyruvic acid (Ser)" evidence="1">
    <location>
        <position position="53"/>
    </location>
</feature>
<keyword id="KW-0963">Cytoplasm</keyword>
<keyword id="KW-0210">Decarboxylase</keyword>
<keyword id="KW-0456">Lyase</keyword>
<keyword id="KW-0670">Pyruvate</keyword>
<keyword id="KW-0843">Virulence</keyword>
<reference key="1">
    <citation type="journal article" date="2008" name="Genome Res.">
        <title>Chlamydia trachomatis: genome sequence analysis of lymphogranuloma venereum isolates.</title>
        <authorList>
            <person name="Thomson N.R."/>
            <person name="Holden M.T.G."/>
            <person name="Carder C."/>
            <person name="Lennard N."/>
            <person name="Lockey S.J."/>
            <person name="Marsh P."/>
            <person name="Skipp P."/>
            <person name="O'Connor C.D."/>
            <person name="Goodhead I."/>
            <person name="Norbertzcak H."/>
            <person name="Harris B."/>
            <person name="Ormond D."/>
            <person name="Rance R."/>
            <person name="Quail M.A."/>
            <person name="Parkhill J."/>
            <person name="Stephens R.S."/>
            <person name="Clarke I.N."/>
        </authorList>
    </citation>
    <scope>NUCLEOTIDE SEQUENCE [LARGE SCALE GENOMIC DNA]</scope>
    <source>
        <strain>ATCC VR-902B / DSM 19102 / 434/Bu</strain>
    </source>
</reference>
<gene>
    <name type="primary">aaxB</name>
    <name type="ordered locus">CTL0627</name>
</gene>
<accession>P0C8R4</accession>
<comment type="function">
    <text evidence="1">Part of the AaxABC system, catalyzes the decarboxylation of L-arginine. The arginine uptake by the bacterium in the macrophage may be a virulence factor against the host innate immune response (By similarity).</text>
</comment>
<comment type="catalytic activity">
    <reaction>
        <text>L-arginine + H(+) = agmatine + CO2</text>
        <dbReference type="Rhea" id="RHEA:17641"/>
        <dbReference type="ChEBI" id="CHEBI:15378"/>
        <dbReference type="ChEBI" id="CHEBI:16526"/>
        <dbReference type="ChEBI" id="CHEBI:32682"/>
        <dbReference type="ChEBI" id="CHEBI:58145"/>
        <dbReference type="EC" id="4.1.1.19"/>
    </reaction>
</comment>
<comment type="cofactor">
    <cofactor evidence="1">
        <name>pyruvate</name>
        <dbReference type="ChEBI" id="CHEBI:15361"/>
    </cofactor>
    <text evidence="1">Binds 1 pyruvoyl group covalently per subunit.</text>
</comment>
<comment type="subunit">
    <text evidence="1">Trimer of an alpha-beta dimer.</text>
</comment>
<comment type="subcellular location">
    <subcellularLocation>
        <location evidence="1">Cytoplasm</location>
    </subcellularLocation>
</comment>
<comment type="similarity">
    <text evidence="2">Belongs to the pyruvoyl-dependent arginine decarboxylase family.</text>
</comment>
<comment type="sequence caution" evidence="2">
    <conflict type="erroneous termination">
        <sequence resource="EMBL" id="AM884176"/>
    </conflict>
    <text>Truncated C-terminus.</text>
</comment>
<protein>
    <recommendedName>
        <fullName>Pyruvoyl-dependent arginine decarboxylase AaxB</fullName>
        <shortName>PvlArgDC</shortName>
        <ecNumber>4.1.1.19</ecNumber>
    </recommendedName>
    <alternativeName>
        <fullName>Biodegradative arginine decarboxylase</fullName>
    </alternativeName>
    <component>
        <recommendedName>
            <fullName>Pyruvoyl-dependent arginine decarboxylase subunit beta</fullName>
        </recommendedName>
    </component>
    <component>
        <recommendedName>
            <fullName>Pyruvoyl-dependent arginine decarboxylase subunit alpha</fullName>
        </recommendedName>
    </component>
</protein>
<name>AAXB_CHLT2</name>
<dbReference type="EC" id="4.1.1.19"/>
<dbReference type="EMBL" id="AM884176">
    <property type="status" value="NOT_ANNOTATED_CDS"/>
    <property type="molecule type" value="Genomic_DNA"/>
</dbReference>
<dbReference type="SMR" id="P0C8R4"/>
<dbReference type="Proteomes" id="UP001154402">
    <property type="component" value="Chromosome"/>
</dbReference>
<dbReference type="GO" id="GO:0005737">
    <property type="term" value="C:cytoplasm"/>
    <property type="evidence" value="ECO:0007669"/>
    <property type="project" value="UniProtKB-SubCell"/>
</dbReference>
<dbReference type="GO" id="GO:0008792">
    <property type="term" value="F:arginine decarboxylase activity"/>
    <property type="evidence" value="ECO:0007669"/>
    <property type="project" value="UniProtKB-EC"/>
</dbReference>
<dbReference type="GO" id="GO:0006527">
    <property type="term" value="P:arginine catabolic process"/>
    <property type="evidence" value="ECO:0007669"/>
    <property type="project" value="InterPro"/>
</dbReference>
<dbReference type="Gene3D" id="3.50.20.10">
    <property type="entry name" value="Pyruvoyl-Dependent Histidine Decarboxylase, subunit B"/>
    <property type="match status" value="1"/>
</dbReference>
<dbReference type="InterPro" id="IPR016104">
    <property type="entry name" value="Pyr-dep_his/arg-deCO2ase"/>
</dbReference>
<dbReference type="InterPro" id="IPR016105">
    <property type="entry name" value="Pyr-dep_his/arg-deCO2ase_sand"/>
</dbReference>
<dbReference type="InterPro" id="IPR002724">
    <property type="entry name" value="Pyruvoyl-dep_arg_deCO2ase"/>
</dbReference>
<dbReference type="PANTHER" id="PTHR40438">
    <property type="entry name" value="PYRUVOYL-DEPENDENT ARGININE DECARBOXYLASE"/>
    <property type="match status" value="1"/>
</dbReference>
<dbReference type="PANTHER" id="PTHR40438:SF1">
    <property type="entry name" value="PYRUVOYL-DEPENDENT ARGININE DECARBOXYLASE"/>
    <property type="match status" value="1"/>
</dbReference>
<dbReference type="Pfam" id="PF01862">
    <property type="entry name" value="PvlArgDC"/>
    <property type="match status" value="1"/>
</dbReference>
<dbReference type="SFLD" id="SFLDG01170">
    <property type="entry name" value="Pyruvoyl-dependent_arginine_de"/>
    <property type="match status" value="1"/>
</dbReference>
<dbReference type="SUPFAM" id="SSF56271">
    <property type="entry name" value="Pyruvoyl-dependent histidine and arginine decarboxylases"/>
    <property type="match status" value="1"/>
</dbReference>
<sequence>MPYGTRYPTLAFHTGGVGESDDGMPPQPFETFCYDSALLQAKIENFNIVPYTSVLPKELFGNILPVDQCTKFFKHGAVLEVIMAGRGATVTDGTQAIATGVGICWGKDKNGELIGGWAAEYVEFFPTWIDDEIAESHAKMWLKKSLQHELDLRSVSKHSEFQYFHNYINIRKKFGFCLTALGFLNFENAAPAVIQ</sequence>
<proteinExistence type="inferred from homology"/>
<organism>
    <name type="scientific">Chlamydia trachomatis serovar L2 (strain ATCC VR-902B / DSM 19102 / 434/Bu)</name>
    <dbReference type="NCBI Taxonomy" id="471472"/>
    <lineage>
        <taxon>Bacteria</taxon>
        <taxon>Pseudomonadati</taxon>
        <taxon>Chlamydiota</taxon>
        <taxon>Chlamydiia</taxon>
        <taxon>Chlamydiales</taxon>
        <taxon>Chlamydiaceae</taxon>
        <taxon>Chlamydia/Chlamydophila group</taxon>
        <taxon>Chlamydia</taxon>
    </lineage>
</organism>
<evidence type="ECO:0000250" key="1"/>
<evidence type="ECO:0000305" key="2"/>